<keyword id="KW-0963">Cytoplasm</keyword>
<keyword id="KW-0460">Magnesium</keyword>
<keyword id="KW-0479">Metal-binding</keyword>
<keyword id="KW-0548">Nucleotidyltransferase</keyword>
<keyword id="KW-1185">Reference proteome</keyword>
<keyword id="KW-0694">RNA-binding</keyword>
<keyword id="KW-0808">Transferase</keyword>
<feature type="chain" id="PRO_1000147914" description="Polyribonucleotide nucleotidyltransferase">
    <location>
        <begin position="1"/>
        <end position="753"/>
    </location>
</feature>
<feature type="domain" description="KH" evidence="1">
    <location>
        <begin position="555"/>
        <end position="614"/>
    </location>
</feature>
<feature type="domain" description="S1 motif" evidence="1">
    <location>
        <begin position="624"/>
        <end position="692"/>
    </location>
</feature>
<feature type="region of interest" description="Disordered" evidence="2">
    <location>
        <begin position="692"/>
        <end position="753"/>
    </location>
</feature>
<feature type="compositionally biased region" description="Basic and acidic residues" evidence="2">
    <location>
        <begin position="699"/>
        <end position="739"/>
    </location>
</feature>
<feature type="binding site" evidence="1">
    <location>
        <position position="488"/>
    </location>
    <ligand>
        <name>Mg(2+)</name>
        <dbReference type="ChEBI" id="CHEBI:18420"/>
    </ligand>
</feature>
<feature type="binding site" evidence="1">
    <location>
        <position position="494"/>
    </location>
    <ligand>
        <name>Mg(2+)</name>
        <dbReference type="ChEBI" id="CHEBI:18420"/>
    </ligand>
</feature>
<name>PNP_DELAS</name>
<dbReference type="EC" id="2.7.7.8" evidence="1"/>
<dbReference type="EMBL" id="CP000884">
    <property type="protein sequence ID" value="ABX37813.1"/>
    <property type="molecule type" value="Genomic_DNA"/>
</dbReference>
<dbReference type="RefSeq" id="WP_012206983.1">
    <property type="nucleotide sequence ID" value="NC_010002.1"/>
</dbReference>
<dbReference type="SMR" id="A9BNB8"/>
<dbReference type="STRING" id="398578.Daci_5184"/>
<dbReference type="GeneID" id="24114709"/>
<dbReference type="KEGG" id="dac:Daci_5184"/>
<dbReference type="eggNOG" id="COG1185">
    <property type="taxonomic scope" value="Bacteria"/>
</dbReference>
<dbReference type="HOGENOM" id="CLU_004217_2_2_4"/>
<dbReference type="Proteomes" id="UP000000784">
    <property type="component" value="Chromosome"/>
</dbReference>
<dbReference type="GO" id="GO:0005829">
    <property type="term" value="C:cytosol"/>
    <property type="evidence" value="ECO:0007669"/>
    <property type="project" value="TreeGrafter"/>
</dbReference>
<dbReference type="GO" id="GO:0000175">
    <property type="term" value="F:3'-5'-RNA exonuclease activity"/>
    <property type="evidence" value="ECO:0007669"/>
    <property type="project" value="TreeGrafter"/>
</dbReference>
<dbReference type="GO" id="GO:0000287">
    <property type="term" value="F:magnesium ion binding"/>
    <property type="evidence" value="ECO:0007669"/>
    <property type="project" value="UniProtKB-UniRule"/>
</dbReference>
<dbReference type="GO" id="GO:0004654">
    <property type="term" value="F:polyribonucleotide nucleotidyltransferase activity"/>
    <property type="evidence" value="ECO:0007669"/>
    <property type="project" value="UniProtKB-UniRule"/>
</dbReference>
<dbReference type="GO" id="GO:0003723">
    <property type="term" value="F:RNA binding"/>
    <property type="evidence" value="ECO:0007669"/>
    <property type="project" value="UniProtKB-UniRule"/>
</dbReference>
<dbReference type="GO" id="GO:0006402">
    <property type="term" value="P:mRNA catabolic process"/>
    <property type="evidence" value="ECO:0007669"/>
    <property type="project" value="UniProtKB-UniRule"/>
</dbReference>
<dbReference type="GO" id="GO:0006396">
    <property type="term" value="P:RNA processing"/>
    <property type="evidence" value="ECO:0007669"/>
    <property type="project" value="InterPro"/>
</dbReference>
<dbReference type="CDD" id="cd02393">
    <property type="entry name" value="KH-I_PNPase"/>
    <property type="match status" value="1"/>
</dbReference>
<dbReference type="CDD" id="cd11363">
    <property type="entry name" value="RNase_PH_PNPase_1"/>
    <property type="match status" value="1"/>
</dbReference>
<dbReference type="CDD" id="cd11364">
    <property type="entry name" value="RNase_PH_PNPase_2"/>
    <property type="match status" value="1"/>
</dbReference>
<dbReference type="CDD" id="cd04472">
    <property type="entry name" value="S1_PNPase"/>
    <property type="match status" value="1"/>
</dbReference>
<dbReference type="FunFam" id="2.40.50.140:FF:000023">
    <property type="entry name" value="Polyribonucleotide nucleotidyltransferase"/>
    <property type="match status" value="1"/>
</dbReference>
<dbReference type="FunFam" id="3.30.1370.10:FF:000001">
    <property type="entry name" value="Polyribonucleotide nucleotidyltransferase"/>
    <property type="match status" value="1"/>
</dbReference>
<dbReference type="FunFam" id="3.30.230.70:FF:000001">
    <property type="entry name" value="Polyribonucleotide nucleotidyltransferase"/>
    <property type="match status" value="1"/>
</dbReference>
<dbReference type="FunFam" id="3.30.230.70:FF:000002">
    <property type="entry name" value="Polyribonucleotide nucleotidyltransferase"/>
    <property type="match status" value="1"/>
</dbReference>
<dbReference type="Gene3D" id="3.30.230.70">
    <property type="entry name" value="GHMP Kinase, N-terminal domain"/>
    <property type="match status" value="2"/>
</dbReference>
<dbReference type="Gene3D" id="3.30.1370.10">
    <property type="entry name" value="K Homology domain, type 1"/>
    <property type="match status" value="1"/>
</dbReference>
<dbReference type="Gene3D" id="2.40.50.140">
    <property type="entry name" value="Nucleic acid-binding proteins"/>
    <property type="match status" value="1"/>
</dbReference>
<dbReference type="HAMAP" id="MF_01595">
    <property type="entry name" value="PNPase"/>
    <property type="match status" value="1"/>
</dbReference>
<dbReference type="InterPro" id="IPR001247">
    <property type="entry name" value="ExoRNase_PH_dom1"/>
</dbReference>
<dbReference type="InterPro" id="IPR015847">
    <property type="entry name" value="ExoRNase_PH_dom2"/>
</dbReference>
<dbReference type="InterPro" id="IPR036345">
    <property type="entry name" value="ExoRNase_PH_dom2_sf"/>
</dbReference>
<dbReference type="InterPro" id="IPR004087">
    <property type="entry name" value="KH_dom"/>
</dbReference>
<dbReference type="InterPro" id="IPR004088">
    <property type="entry name" value="KH_dom_type_1"/>
</dbReference>
<dbReference type="InterPro" id="IPR036612">
    <property type="entry name" value="KH_dom_type_1_sf"/>
</dbReference>
<dbReference type="InterPro" id="IPR012340">
    <property type="entry name" value="NA-bd_OB-fold"/>
</dbReference>
<dbReference type="InterPro" id="IPR012162">
    <property type="entry name" value="PNPase"/>
</dbReference>
<dbReference type="InterPro" id="IPR027408">
    <property type="entry name" value="PNPase/RNase_PH_dom_sf"/>
</dbReference>
<dbReference type="InterPro" id="IPR015848">
    <property type="entry name" value="PNPase_PH_RNA-bd_bac/org-type"/>
</dbReference>
<dbReference type="InterPro" id="IPR036456">
    <property type="entry name" value="PNPase_PH_RNA-bd_sf"/>
</dbReference>
<dbReference type="InterPro" id="IPR020568">
    <property type="entry name" value="Ribosomal_Su5_D2-typ_SF"/>
</dbReference>
<dbReference type="InterPro" id="IPR003029">
    <property type="entry name" value="S1_domain"/>
</dbReference>
<dbReference type="NCBIfam" id="TIGR03591">
    <property type="entry name" value="polynuc_phos"/>
    <property type="match status" value="1"/>
</dbReference>
<dbReference type="NCBIfam" id="NF008805">
    <property type="entry name" value="PRK11824.1"/>
    <property type="match status" value="1"/>
</dbReference>
<dbReference type="PANTHER" id="PTHR11252">
    <property type="entry name" value="POLYRIBONUCLEOTIDE NUCLEOTIDYLTRANSFERASE"/>
    <property type="match status" value="1"/>
</dbReference>
<dbReference type="PANTHER" id="PTHR11252:SF0">
    <property type="entry name" value="POLYRIBONUCLEOTIDE NUCLEOTIDYLTRANSFERASE 1, MITOCHONDRIAL"/>
    <property type="match status" value="1"/>
</dbReference>
<dbReference type="Pfam" id="PF00013">
    <property type="entry name" value="KH_1"/>
    <property type="match status" value="1"/>
</dbReference>
<dbReference type="Pfam" id="PF03726">
    <property type="entry name" value="PNPase"/>
    <property type="match status" value="1"/>
</dbReference>
<dbReference type="Pfam" id="PF01138">
    <property type="entry name" value="RNase_PH"/>
    <property type="match status" value="2"/>
</dbReference>
<dbReference type="Pfam" id="PF03725">
    <property type="entry name" value="RNase_PH_C"/>
    <property type="match status" value="2"/>
</dbReference>
<dbReference type="Pfam" id="PF00575">
    <property type="entry name" value="S1"/>
    <property type="match status" value="1"/>
</dbReference>
<dbReference type="PIRSF" id="PIRSF005499">
    <property type="entry name" value="PNPase"/>
    <property type="match status" value="1"/>
</dbReference>
<dbReference type="SMART" id="SM00322">
    <property type="entry name" value="KH"/>
    <property type="match status" value="1"/>
</dbReference>
<dbReference type="SMART" id="SM00316">
    <property type="entry name" value="S1"/>
    <property type="match status" value="1"/>
</dbReference>
<dbReference type="SUPFAM" id="SSF54791">
    <property type="entry name" value="Eukaryotic type KH-domain (KH-domain type I)"/>
    <property type="match status" value="1"/>
</dbReference>
<dbReference type="SUPFAM" id="SSF50249">
    <property type="entry name" value="Nucleic acid-binding proteins"/>
    <property type="match status" value="1"/>
</dbReference>
<dbReference type="SUPFAM" id="SSF46915">
    <property type="entry name" value="Polynucleotide phosphorylase/guanosine pentaphosphate synthase (PNPase/GPSI), domain 3"/>
    <property type="match status" value="1"/>
</dbReference>
<dbReference type="SUPFAM" id="SSF55666">
    <property type="entry name" value="Ribonuclease PH domain 2-like"/>
    <property type="match status" value="2"/>
</dbReference>
<dbReference type="SUPFAM" id="SSF54211">
    <property type="entry name" value="Ribosomal protein S5 domain 2-like"/>
    <property type="match status" value="2"/>
</dbReference>
<dbReference type="PROSITE" id="PS50084">
    <property type="entry name" value="KH_TYPE_1"/>
    <property type="match status" value="1"/>
</dbReference>
<dbReference type="PROSITE" id="PS50126">
    <property type="entry name" value="S1"/>
    <property type="match status" value="1"/>
</dbReference>
<proteinExistence type="inferred from homology"/>
<protein>
    <recommendedName>
        <fullName evidence="1">Polyribonucleotide nucleotidyltransferase</fullName>
        <ecNumber evidence="1">2.7.7.8</ecNumber>
    </recommendedName>
    <alternativeName>
        <fullName evidence="1">Polynucleotide phosphorylase</fullName>
        <shortName evidence="1">PNPase</shortName>
    </alternativeName>
</protein>
<gene>
    <name evidence="1" type="primary">pnp</name>
    <name type="ordered locus">Daci_5184</name>
</gene>
<accession>A9BNB8</accession>
<sequence>MSIFNKVTKTFQWGQHTVTMETGEIARQASGAVLVNIDDTVVLATVVASKQAKSGQDFFPLTVDYIEKTYAAGKIPGSFFKREAKPSELETLTSRLIDRPIRPLFPEGFYNDVHVVIHTVSLNPEVDADIAALIATSAALSVSGIPFNGPIGAARVGFINGEYVLNPGQTQRKDSQMDLVVAGTEAAVLMVESEAQQLPEDVMLGAVVFGHEQGRIAIDAIHELVREAGKPVWDWVAPAKDEELIAKVAALGDEALRTAYQIRNKQSRTQACREAYAAVKAGLTAQGVEFDGVKVEGMLFDIEARIVRSQILAGEPRIDGRDTRTVRPIEIRNSVLPRTHGSALFTRGETQALVVSTLGTERDAQRIDALAGEFEDRFLFHYNMPPFATGEVGRMGSTKRREIGHGRLAKRALAACLPSKEEFPYTIRVVSEITESNGSSSMASVCGGCLSMMDAGVPMKAHVAGIAMGLIKEDNRFAVLTDILGDEDHLGDMDFKVAGTTSGITALQMDIKIQGITKEIMQVALAQAKEARMHILGKMQEAMGEAKAEISSFAPKLYTMKINPEKIRDVIGKGGSTIRALTEETGTQIDIGEDGTITIASSDAAKADEAKRRIEEITAEVEIGKIYEGPVTKILDFGALVNLLPGKDGLLHISQIAHERVERVADYLQEGQIIKVKVMETDEKGRVKLSLKALTERPAGMERSDRPAPAEREFRQPREPRQQREFREPREPREPRDGGRPAAEGEQQQQQQQ</sequence>
<reference key="1">
    <citation type="submission" date="2007-11" db="EMBL/GenBank/DDBJ databases">
        <title>Complete sequence of Delftia acidovorans DSM 14801 / SPH-1.</title>
        <authorList>
            <person name="Copeland A."/>
            <person name="Lucas S."/>
            <person name="Lapidus A."/>
            <person name="Barry K."/>
            <person name="Glavina del Rio T."/>
            <person name="Dalin E."/>
            <person name="Tice H."/>
            <person name="Pitluck S."/>
            <person name="Lowry S."/>
            <person name="Clum A."/>
            <person name="Schmutz J."/>
            <person name="Larimer F."/>
            <person name="Land M."/>
            <person name="Hauser L."/>
            <person name="Kyrpides N."/>
            <person name="Kim E."/>
            <person name="Schleheck D."/>
            <person name="Richardson P."/>
        </authorList>
    </citation>
    <scope>NUCLEOTIDE SEQUENCE [LARGE SCALE GENOMIC DNA]</scope>
    <source>
        <strain>DSM 14801 / SPH-1</strain>
    </source>
</reference>
<evidence type="ECO:0000255" key="1">
    <source>
        <dbReference type="HAMAP-Rule" id="MF_01595"/>
    </source>
</evidence>
<evidence type="ECO:0000256" key="2">
    <source>
        <dbReference type="SAM" id="MobiDB-lite"/>
    </source>
</evidence>
<organism>
    <name type="scientific">Delftia acidovorans (strain DSM 14801 / SPH-1)</name>
    <dbReference type="NCBI Taxonomy" id="398578"/>
    <lineage>
        <taxon>Bacteria</taxon>
        <taxon>Pseudomonadati</taxon>
        <taxon>Pseudomonadota</taxon>
        <taxon>Betaproteobacteria</taxon>
        <taxon>Burkholderiales</taxon>
        <taxon>Comamonadaceae</taxon>
        <taxon>Delftia</taxon>
    </lineage>
</organism>
<comment type="function">
    <text evidence="1">Involved in mRNA degradation. Catalyzes the phosphorolysis of single-stranded polyribonucleotides processively in the 3'- to 5'-direction.</text>
</comment>
<comment type="catalytic activity">
    <reaction evidence="1">
        <text>RNA(n+1) + phosphate = RNA(n) + a ribonucleoside 5'-diphosphate</text>
        <dbReference type="Rhea" id="RHEA:22096"/>
        <dbReference type="Rhea" id="RHEA-COMP:14527"/>
        <dbReference type="Rhea" id="RHEA-COMP:17342"/>
        <dbReference type="ChEBI" id="CHEBI:43474"/>
        <dbReference type="ChEBI" id="CHEBI:57930"/>
        <dbReference type="ChEBI" id="CHEBI:140395"/>
        <dbReference type="EC" id="2.7.7.8"/>
    </reaction>
</comment>
<comment type="cofactor">
    <cofactor evidence="1">
        <name>Mg(2+)</name>
        <dbReference type="ChEBI" id="CHEBI:18420"/>
    </cofactor>
</comment>
<comment type="subcellular location">
    <subcellularLocation>
        <location evidence="1">Cytoplasm</location>
    </subcellularLocation>
</comment>
<comment type="similarity">
    <text evidence="1">Belongs to the polyribonucleotide nucleotidyltransferase family.</text>
</comment>